<comment type="function">
    <text>Actins are highly conserved proteins that are involved in various types of cell motility and are ubiquitously expressed in all eukaryotic cells.</text>
</comment>
<comment type="catalytic activity">
    <reaction evidence="7">
        <text>ATP + H2O = ADP + phosphate + H(+)</text>
        <dbReference type="Rhea" id="RHEA:13065"/>
        <dbReference type="ChEBI" id="CHEBI:15377"/>
        <dbReference type="ChEBI" id="CHEBI:15378"/>
        <dbReference type="ChEBI" id="CHEBI:30616"/>
        <dbReference type="ChEBI" id="CHEBI:43474"/>
        <dbReference type="ChEBI" id="CHEBI:456216"/>
    </reaction>
</comment>
<comment type="subunit">
    <text evidence="3 5">Polymerization of globular actin (G-actin) leads to a structural filament (F-actin) in the form of a two-stranded helix. Each actin can bind to 4 others (By similarity). Interacts with alpha-actinin. Identified in a complex composed of ACTA1, COBL, GSN AND TMSB4X (By similarity). Interacts with TTID. Interacts (via its C-terminus) with USP25 (By similarity).</text>
</comment>
<comment type="subcellular location">
    <subcellularLocation>
        <location>Cytoplasm</location>
        <location>Cytoskeleton</location>
    </subcellularLocation>
</comment>
<comment type="PTM">
    <molecule>Actin, alpha skeletal muscle, intermediate form</molecule>
    <text evidence="4">N-terminal cleavage of acetylated cysteine of intermediate muscle actin by ACTMAP.</text>
</comment>
<comment type="PTM">
    <text evidence="4">Oxidation of Met-46 and Met-49 by MICALs (MICAL1, MICAL2 or MICAL3) to form methionine sulfoxide promotes actin filament depolymerization. MICAL1 and MICAL2 produce the (R)-S-oxide form. The (R)-S-oxide form is reverted by MSRB1 and MSRB2, which promotes actin repolymerization.</text>
</comment>
<comment type="PTM">
    <text evidence="3">Monomethylation at Lys-86 (K84me1) regulates actin-myosin interaction and actomyosin-dependent processes. Demethylation by ALKBH4 is required for maintaining actomyosin dynamics supporting normal cleavage furrow ingression during cytokinesis and cell migration.</text>
</comment>
<comment type="PTM">
    <text evidence="3">Methylated at His-75 by SETD3.</text>
</comment>
<comment type="miscellaneous">
    <text>In vertebrates 3 main groups of actin isoforms, alpha, beta and gamma have been identified. The alpha actins are found in muscle tissues and are a major constituent of the contractile apparatus. The beta and gamma actins coexist in most cell types as components of the cytoskeleton and as mediators of internal cell motility.</text>
</comment>
<comment type="similarity">
    <text evidence="8">Belongs to the actin family.</text>
</comment>
<evidence type="ECO:0000250" key="1"/>
<evidence type="ECO:0000250" key="2">
    <source>
        <dbReference type="UniProtKB" id="P62737"/>
    </source>
</evidence>
<evidence type="ECO:0000250" key="3">
    <source>
        <dbReference type="UniProtKB" id="P68133"/>
    </source>
</evidence>
<evidence type="ECO:0000250" key="4">
    <source>
        <dbReference type="UniProtKB" id="P68134"/>
    </source>
</evidence>
<evidence type="ECO:0000250" key="5">
    <source>
        <dbReference type="UniProtKB" id="P68135"/>
    </source>
</evidence>
<evidence type="ECO:0000250" key="6">
    <source>
        <dbReference type="UniProtKB" id="P68138"/>
    </source>
</evidence>
<evidence type="ECO:0000269" key="7">
    <source>
    </source>
</evidence>
<evidence type="ECO:0000305" key="8"/>
<evidence type="ECO:0007829" key="9">
    <source>
        <dbReference type="PDB" id="4CBW"/>
    </source>
</evidence>
<evidence type="ECO:0007829" key="10">
    <source>
        <dbReference type="PDB" id="8DD0"/>
    </source>
</evidence>
<evidence type="ECO:0007829" key="11">
    <source>
        <dbReference type="PDB" id="8EFH"/>
    </source>
</evidence>
<feature type="initiator methionine" description="Removed">
    <location>
        <position position="1"/>
    </location>
</feature>
<feature type="chain" id="PRO_0000442807" description="Actin, alpha skeletal muscle, intermediate form" evidence="2">
    <location>
        <begin position="2"/>
        <end position="377"/>
    </location>
</feature>
<feature type="chain" id="PRO_0000442808" description="Actin, alpha skeletal muscle" evidence="2">
    <location>
        <begin position="3"/>
        <end position="377"/>
    </location>
</feature>
<feature type="region of interest" description="Interaction with alpha-actinin" evidence="5">
    <location>
        <begin position="112"/>
        <end position="125"/>
    </location>
</feature>
<feature type="region of interest" description="Interaction with alpha-actinin" evidence="5">
    <location>
        <begin position="360"/>
        <end position="372"/>
    </location>
</feature>
<feature type="modified residue" description="N-acetylcysteine; in intermediate form" evidence="2">
    <location>
        <position position="2"/>
    </location>
</feature>
<feature type="modified residue" description="Methionine (R)-sulfoxide" evidence="4">
    <location>
        <position position="46"/>
    </location>
</feature>
<feature type="modified residue" description="Methionine (R)-sulfoxide" evidence="4">
    <location>
        <position position="49"/>
    </location>
</feature>
<feature type="modified residue" description="N6-malonyllysine" evidence="1">
    <location>
        <position position="63"/>
    </location>
</feature>
<feature type="modified residue" description="Tele-methylhistidine" evidence="6">
    <location>
        <position position="75"/>
    </location>
</feature>
<feature type="modified residue" description="N6-methyllysine" evidence="3">
    <location>
        <position position="86"/>
    </location>
</feature>
<feature type="strand" evidence="11">
    <location>
        <begin position="10"/>
        <end position="13"/>
    </location>
</feature>
<feature type="strand" evidence="11">
    <location>
        <begin position="19"/>
        <end position="23"/>
    </location>
</feature>
<feature type="strand" evidence="10">
    <location>
        <begin position="26"/>
        <end position="28"/>
    </location>
</feature>
<feature type="strand" evidence="11">
    <location>
        <begin position="30"/>
        <end position="33"/>
    </location>
</feature>
<feature type="strand" evidence="11">
    <location>
        <begin position="37"/>
        <end position="40"/>
    </location>
</feature>
<feature type="strand" evidence="10">
    <location>
        <begin position="47"/>
        <end position="49"/>
    </location>
</feature>
<feature type="helix" evidence="9">
    <location>
        <begin position="58"/>
        <end position="61"/>
    </location>
</feature>
<feature type="helix" evidence="9">
    <location>
        <begin position="62"/>
        <end position="66"/>
    </location>
</feature>
<feature type="strand" evidence="9">
    <location>
        <begin position="67"/>
        <end position="70"/>
    </location>
</feature>
<feature type="strand" evidence="9">
    <location>
        <begin position="72"/>
        <end position="74"/>
    </location>
</feature>
<feature type="helix" evidence="11">
    <location>
        <begin position="81"/>
        <end position="93"/>
    </location>
</feature>
<feature type="turn" evidence="10">
    <location>
        <begin position="94"/>
        <end position="96"/>
    </location>
</feature>
<feature type="helix" evidence="10">
    <location>
        <begin position="100"/>
        <end position="102"/>
    </location>
</feature>
<feature type="strand" evidence="11">
    <location>
        <begin position="105"/>
        <end position="109"/>
    </location>
</feature>
<feature type="helix" evidence="11">
    <location>
        <begin position="115"/>
        <end position="127"/>
    </location>
</feature>
<feature type="strand" evidence="11">
    <location>
        <begin position="132"/>
        <end position="138"/>
    </location>
</feature>
<feature type="helix" evidence="11">
    <location>
        <begin position="139"/>
        <end position="146"/>
    </location>
</feature>
<feature type="strand" evidence="11">
    <location>
        <begin position="150"/>
        <end position="152"/>
    </location>
</feature>
<feature type="strand" evidence="11">
    <location>
        <begin position="154"/>
        <end position="157"/>
    </location>
</feature>
<feature type="strand" evidence="11">
    <location>
        <begin position="162"/>
        <end position="165"/>
    </location>
</feature>
<feature type="helix" evidence="11">
    <location>
        <begin position="174"/>
        <end position="176"/>
    </location>
</feature>
<feature type="strand" evidence="11">
    <location>
        <begin position="178"/>
        <end position="180"/>
    </location>
</feature>
<feature type="helix" evidence="11">
    <location>
        <begin position="184"/>
        <end position="195"/>
    </location>
</feature>
<feature type="turn" evidence="11">
    <location>
        <begin position="196"/>
        <end position="199"/>
    </location>
</feature>
<feature type="helix" evidence="11">
    <location>
        <begin position="205"/>
        <end position="218"/>
    </location>
</feature>
<feature type="helix" evidence="11">
    <location>
        <begin position="226"/>
        <end position="234"/>
    </location>
</feature>
<feature type="strand" evidence="11">
    <location>
        <begin position="240"/>
        <end position="244"/>
    </location>
</feature>
<feature type="strand" evidence="11">
    <location>
        <begin position="247"/>
        <end position="252"/>
    </location>
</feature>
<feature type="helix" evidence="11">
    <location>
        <begin position="255"/>
        <end position="258"/>
    </location>
</feature>
<feature type="helix" evidence="11">
    <location>
        <begin position="260"/>
        <end position="263"/>
    </location>
</feature>
<feature type="helix" evidence="11">
    <location>
        <begin position="266"/>
        <end position="269"/>
    </location>
</feature>
<feature type="helix" evidence="11">
    <location>
        <begin position="276"/>
        <end position="286"/>
    </location>
</feature>
<feature type="helix" evidence="11">
    <location>
        <begin position="292"/>
        <end position="297"/>
    </location>
</feature>
<feature type="strand" evidence="11">
    <location>
        <begin position="299"/>
        <end position="303"/>
    </location>
</feature>
<feature type="helix" evidence="11">
    <location>
        <begin position="304"/>
        <end position="307"/>
    </location>
</feature>
<feature type="helix" evidence="11">
    <location>
        <begin position="311"/>
        <end position="322"/>
    </location>
</feature>
<feature type="strand" evidence="10">
    <location>
        <begin position="325"/>
        <end position="327"/>
    </location>
</feature>
<feature type="helix" evidence="11">
    <location>
        <begin position="340"/>
        <end position="350"/>
    </location>
</feature>
<feature type="helix" evidence="11">
    <location>
        <begin position="355"/>
        <end position="357"/>
    </location>
</feature>
<feature type="strand" evidence="11">
    <location>
        <begin position="358"/>
        <end position="360"/>
    </location>
</feature>
<feature type="helix" evidence="11">
    <location>
        <begin position="361"/>
        <end position="367"/>
    </location>
</feature>
<feature type="helix" evidence="11">
    <location>
        <begin position="369"/>
        <end position="373"/>
    </location>
</feature>
<keyword id="KW-0002">3D-structure</keyword>
<keyword id="KW-0007">Acetylation</keyword>
<keyword id="KW-0067">ATP-binding</keyword>
<keyword id="KW-0963">Cytoplasm</keyword>
<keyword id="KW-0206">Cytoskeleton</keyword>
<keyword id="KW-0378">Hydrolase</keyword>
<keyword id="KW-0488">Methylation</keyword>
<keyword id="KW-0514">Muscle protein</keyword>
<keyword id="KW-0547">Nucleotide-binding</keyword>
<keyword id="KW-0558">Oxidation</keyword>
<keyword id="KW-1185">Reference proteome</keyword>
<sequence length="377" mass="42051">MCDEDETTALVCDNGSGLVKAGFAGDDAPRAVFPSIVGRPRHQGVMVGMGQKDSYVGDEAQSKRGILTLKYPIEHGIITNWDDMEKIWHHTFYNELRVAPEEHPTLLTEAPLNPKANREKMTQIMFETFNVPAMYVAIQAVLSLYASGRTTGIVLDSGDGVTHNVPIYEGYALPHAIMRLDLAGRDLTDYLMKILTERGYSFVTTAEREIVRDIKEKLCYVALDFENEMATAASSSSLEKSYELPDGQVITIGNERFRCPETLFQPSFIGMESAGIHETTYNSIMKCDIDIRKDLYANNVMSGGTTMYPGIADRMQKEITALAPSTMKIKIIAPPERKYSVWIGGSILASLSTFQQMWITKQEYDEAGPSIVHRKCF</sequence>
<protein>
    <recommendedName>
        <fullName>Actin, alpha skeletal muscle</fullName>
        <ecNumber evidence="7">3.6.4.-</ecNumber>
    </recommendedName>
    <alternativeName>
        <fullName>Alpha-actin-1</fullName>
    </alternativeName>
    <component>
        <recommendedName>
            <fullName>Actin, alpha skeletal muscle, intermediate form</fullName>
        </recommendedName>
    </component>
</protein>
<proteinExistence type="evidence at protein level"/>
<gene>
    <name type="primary">ACTA1</name>
    <name type="synonym">ACTA</name>
</gene>
<reference key="1">
    <citation type="journal article" date="1996" name="Gene">
        <title>Structure and regulation of the porcine skeletal alpha-actin-encoding gene.</title>
        <authorList>
            <person name="Reecy J.M."/>
            <person name="Bidwell C.A."/>
            <person name="Briley G.P."/>
            <person name="Grant A.L."/>
        </authorList>
    </citation>
    <scope>NUCLEOTIDE SEQUENCE [GENOMIC DNA]</scope>
    <source>
        <tissue>Blood</tissue>
    </source>
</reference>
<reference key="2">
    <citation type="journal article" date="2014" name="PLoS Pathog.">
        <title>Structural differences explain diverse functions of Plasmodium actins.</title>
        <authorList>
            <person name="Vahokoski J."/>
            <person name="Bhargav S.P."/>
            <person name="Desfosses A."/>
            <person name="Andreadaki M."/>
            <person name="Kumpula E.P."/>
            <person name="Martinez S.M."/>
            <person name="Ignatev A."/>
            <person name="Lepper S."/>
            <person name="Frischknecht F."/>
            <person name="Siden-Kiamos I."/>
            <person name="Sachse C."/>
            <person name="Kursula I."/>
        </authorList>
    </citation>
    <scope>CATALYTIC ACTIVITY</scope>
</reference>
<dbReference type="EC" id="3.6.4.-" evidence="7"/>
<dbReference type="EMBL" id="U16368">
    <property type="protein sequence ID" value="AAC48692.1"/>
    <property type="molecule type" value="Genomic_DNA"/>
</dbReference>
<dbReference type="PIR" id="JC5301">
    <property type="entry name" value="JC5301"/>
</dbReference>
<dbReference type="RefSeq" id="NP_001161267.1">
    <property type="nucleotide sequence ID" value="NM_001167795.1"/>
</dbReference>
<dbReference type="RefSeq" id="XP_005671033.1">
    <property type="nucleotide sequence ID" value="XM_005670976.2"/>
</dbReference>
<dbReference type="PDB" id="4CBW">
    <property type="method" value="X-ray"/>
    <property type="resolution" value="2.50 A"/>
    <property type="chains" value="A=41-77"/>
</dbReference>
<dbReference type="PDB" id="5NOG">
    <property type="method" value="EM"/>
    <property type="resolution" value="11.00 A"/>
    <property type="chains" value="A/B/C/D/E=7-373"/>
</dbReference>
<dbReference type="PDB" id="5NOJ">
    <property type="method" value="EM"/>
    <property type="resolution" value="11.00 A"/>
    <property type="chains" value="A/B/C/D/E=7-373"/>
</dbReference>
<dbReference type="PDB" id="5NOL">
    <property type="method" value="EM"/>
    <property type="resolution" value="8.00 A"/>
    <property type="chains" value="A/B/C/D/E=7-373"/>
</dbReference>
<dbReference type="PDB" id="7KO4">
    <property type="method" value="EM"/>
    <property type="resolution" value="8.00 A"/>
    <property type="chains" value="A/B/C/D/E/F/G/H/I/J/K/L/M/N/O=3-377"/>
</dbReference>
<dbReference type="PDB" id="7KO5">
    <property type="method" value="EM"/>
    <property type="resolution" value="7.80 A"/>
    <property type="chains" value="A/B/C/D/E/F/G/H/I/J/K/L/M/N/O=3-377"/>
</dbReference>
<dbReference type="PDB" id="7KO7">
    <property type="method" value="EM"/>
    <property type="resolution" value="8.30 A"/>
    <property type="chains" value="A/B/C/D/E/F/G/H/I/J/K/L/M/N/O=3-377"/>
</dbReference>
<dbReference type="PDB" id="7KON">
    <property type="method" value="EM"/>
    <property type="resolution" value="8.10 A"/>
    <property type="chains" value="A/B/C/D/E/F/G/H/I/J/K/L/M/N/O=3-377"/>
</dbReference>
<dbReference type="PDB" id="7KOR">
    <property type="method" value="EM"/>
    <property type="resolution" value="7.80 A"/>
    <property type="chains" value="A/B/C/D/E/F/G/H/I/J/K/L/M/N/O=3-377"/>
</dbReference>
<dbReference type="PDB" id="7TIJ">
    <property type="method" value="EM"/>
    <property type="resolution" value="8.00 A"/>
    <property type="chains" value="A/B/C/D/E/F=3-377"/>
</dbReference>
<dbReference type="PDB" id="7TIT">
    <property type="method" value="EM"/>
    <property type="resolution" value="8.00 A"/>
    <property type="chains" value="A/B/C/D/E/F=3-377"/>
</dbReference>
<dbReference type="PDB" id="7TJ7">
    <property type="method" value="EM"/>
    <property type="resolution" value="8.00 A"/>
    <property type="chains" value="A/B/C/D/E/F=3-377"/>
</dbReference>
<dbReference type="PDB" id="8DD0">
    <property type="method" value="EM"/>
    <property type="resolution" value="3.50 A"/>
    <property type="chains" value="A/B/C/D/E/F=1-377"/>
</dbReference>
<dbReference type="PDB" id="8EFH">
    <property type="method" value="EM"/>
    <property type="resolution" value="3.30 A"/>
    <property type="chains" value="B/C/D/E/F=1-377"/>
</dbReference>
<dbReference type="PDBsum" id="4CBW"/>
<dbReference type="PDBsum" id="5NOG"/>
<dbReference type="PDBsum" id="5NOJ"/>
<dbReference type="PDBsum" id="5NOL"/>
<dbReference type="PDBsum" id="7KO4"/>
<dbReference type="PDBsum" id="7KO5"/>
<dbReference type="PDBsum" id="7KO7"/>
<dbReference type="PDBsum" id="7KON"/>
<dbReference type="PDBsum" id="7KOR"/>
<dbReference type="PDBsum" id="7TIJ"/>
<dbReference type="PDBsum" id="7TIT"/>
<dbReference type="PDBsum" id="7TJ7"/>
<dbReference type="PDBsum" id="8DD0"/>
<dbReference type="PDBsum" id="8EFH"/>
<dbReference type="EMDB" id="EMD-22964"/>
<dbReference type="EMDB" id="EMD-22965"/>
<dbReference type="EMDB" id="EMD-22966"/>
<dbReference type="EMDB" id="EMD-22978"/>
<dbReference type="EMDB" id="EMD-22981"/>
<dbReference type="EMDB" id="EMD-3665"/>
<dbReference type="EMDB" id="EMD-3666"/>
<dbReference type="EMDB" id="EMD-4169"/>
<dbReference type="SMR" id="P68137"/>
<dbReference type="FunCoup" id="P68137">
    <property type="interactions" value="569"/>
</dbReference>
<dbReference type="STRING" id="9823.ENSSSCP00000005172"/>
<dbReference type="PaxDb" id="9823-ENSSSCP00000010867"/>
<dbReference type="PeptideAtlas" id="P68137"/>
<dbReference type="Ensembl" id="ENSSSCT00000040776.3">
    <property type="protein sequence ID" value="ENSSSCP00000055172.2"/>
    <property type="gene ID" value="ENSSSCG00000010190.5"/>
</dbReference>
<dbReference type="Ensembl" id="ENSSSCT00015064766.1">
    <property type="protein sequence ID" value="ENSSSCP00015025920.1"/>
    <property type="gene ID" value="ENSSSCG00015047339.1"/>
</dbReference>
<dbReference type="Ensembl" id="ENSSSCT00040062959.1">
    <property type="protein sequence ID" value="ENSSSCP00040026558.1"/>
    <property type="gene ID" value="ENSSSCG00040044916.1"/>
</dbReference>
<dbReference type="Ensembl" id="ENSSSCT00055049539.1">
    <property type="protein sequence ID" value="ENSSSCP00055039593.1"/>
    <property type="gene ID" value="ENSSSCG00055024685.1"/>
</dbReference>
<dbReference type="Ensembl" id="ENSSSCT00065106117.1">
    <property type="protein sequence ID" value="ENSSSCP00065047178.1"/>
    <property type="gene ID" value="ENSSSCG00065076746.1"/>
</dbReference>
<dbReference type="Ensembl" id="ENSSSCT00085042474">
    <property type="protein sequence ID" value="ENSSSCP00085029868"/>
    <property type="gene ID" value="ENSSSCG00085022110"/>
</dbReference>
<dbReference type="Ensembl" id="ENSSSCT00090034636">
    <property type="protein sequence ID" value="ENSSSCP00090021505"/>
    <property type="gene ID" value="ENSSSCG00090019605"/>
</dbReference>
<dbReference type="Ensembl" id="ENSSSCT00105036749">
    <property type="protein sequence ID" value="ENSSSCP00105025537"/>
    <property type="gene ID" value="ENSSSCG00105019137"/>
</dbReference>
<dbReference type="Ensembl" id="ENSSSCT00110020577">
    <property type="protein sequence ID" value="ENSSSCP00110013857"/>
    <property type="gene ID" value="ENSSSCG00110010725"/>
</dbReference>
<dbReference type="Ensembl" id="ENSSSCT00115015892">
    <property type="protein sequence ID" value="ENSSSCP00115014992"/>
    <property type="gene ID" value="ENSSSCG00115009152"/>
</dbReference>
<dbReference type="Ensembl" id="ENSSSCT00130055837">
    <property type="protein sequence ID" value="ENSSSCP00130040063"/>
    <property type="gene ID" value="ENSSSCG00130028578"/>
</dbReference>
<dbReference type="GeneID" id="100154254"/>
<dbReference type="KEGG" id="ssc:100154254"/>
<dbReference type="CTD" id="58"/>
<dbReference type="eggNOG" id="KOG0676">
    <property type="taxonomic scope" value="Eukaryota"/>
</dbReference>
<dbReference type="GeneTree" id="ENSGT00940000156048"/>
<dbReference type="HOGENOM" id="CLU_027965_0_2_1"/>
<dbReference type="InParanoid" id="P68137"/>
<dbReference type="OMA" id="EDAPRCC"/>
<dbReference type="OrthoDB" id="5132116at2759"/>
<dbReference type="TreeFam" id="TF354237"/>
<dbReference type="Reactome" id="R-SSC-390522">
    <property type="pathway name" value="Striated Muscle Contraction"/>
</dbReference>
<dbReference type="Reactome" id="R-SSC-9913351">
    <property type="pathway name" value="Formation of the dystrophin-glycoprotein complex (DGC)"/>
</dbReference>
<dbReference type="Proteomes" id="UP000008227">
    <property type="component" value="Chromosome 14"/>
</dbReference>
<dbReference type="Proteomes" id="UP000314985">
    <property type="component" value="Unplaced"/>
</dbReference>
<dbReference type="Proteomes" id="UP000694570">
    <property type="component" value="Unplaced"/>
</dbReference>
<dbReference type="Proteomes" id="UP000694571">
    <property type="component" value="Unplaced"/>
</dbReference>
<dbReference type="Proteomes" id="UP000694720">
    <property type="component" value="Unplaced"/>
</dbReference>
<dbReference type="Proteomes" id="UP000694722">
    <property type="component" value="Unplaced"/>
</dbReference>
<dbReference type="Proteomes" id="UP000694723">
    <property type="component" value="Unplaced"/>
</dbReference>
<dbReference type="Proteomes" id="UP000694724">
    <property type="component" value="Unplaced"/>
</dbReference>
<dbReference type="Proteomes" id="UP000694725">
    <property type="component" value="Unplaced"/>
</dbReference>
<dbReference type="Proteomes" id="UP000694726">
    <property type="component" value="Unplaced"/>
</dbReference>
<dbReference type="Proteomes" id="UP000694727">
    <property type="component" value="Unplaced"/>
</dbReference>
<dbReference type="Proteomes" id="UP000694728">
    <property type="component" value="Unplaced"/>
</dbReference>
<dbReference type="GO" id="GO:0005884">
    <property type="term" value="C:actin filament"/>
    <property type="evidence" value="ECO:0000250"/>
    <property type="project" value="UniProtKB"/>
</dbReference>
<dbReference type="GO" id="GO:0044297">
    <property type="term" value="C:cell body"/>
    <property type="evidence" value="ECO:0000250"/>
    <property type="project" value="AgBase"/>
</dbReference>
<dbReference type="GO" id="GO:0005737">
    <property type="term" value="C:cytoplasm"/>
    <property type="evidence" value="ECO:0000250"/>
    <property type="project" value="AgBase"/>
</dbReference>
<dbReference type="GO" id="GO:0030175">
    <property type="term" value="C:filopodium"/>
    <property type="evidence" value="ECO:0000250"/>
    <property type="project" value="AgBase"/>
</dbReference>
<dbReference type="GO" id="GO:0030027">
    <property type="term" value="C:lamellipodium"/>
    <property type="evidence" value="ECO:0000250"/>
    <property type="project" value="AgBase"/>
</dbReference>
<dbReference type="GO" id="GO:0001725">
    <property type="term" value="C:stress fiber"/>
    <property type="evidence" value="ECO:0000250"/>
    <property type="project" value="UniProtKB"/>
</dbReference>
<dbReference type="GO" id="GO:0005865">
    <property type="term" value="C:striated muscle thin filament"/>
    <property type="evidence" value="ECO:0000250"/>
    <property type="project" value="UniProtKB"/>
</dbReference>
<dbReference type="GO" id="GO:0005524">
    <property type="term" value="F:ATP binding"/>
    <property type="evidence" value="ECO:0007669"/>
    <property type="project" value="UniProtKB-KW"/>
</dbReference>
<dbReference type="GO" id="GO:0016787">
    <property type="term" value="F:hydrolase activity"/>
    <property type="evidence" value="ECO:0007669"/>
    <property type="project" value="UniProtKB-KW"/>
</dbReference>
<dbReference type="GO" id="GO:0090131">
    <property type="term" value="P:mesenchyme migration"/>
    <property type="evidence" value="ECO:0000250"/>
    <property type="project" value="AgBase"/>
</dbReference>
<dbReference type="GO" id="GO:0010628">
    <property type="term" value="P:positive regulation of gene expression"/>
    <property type="evidence" value="ECO:0000250"/>
    <property type="project" value="AgBase"/>
</dbReference>
<dbReference type="GO" id="GO:0048741">
    <property type="term" value="P:skeletal muscle fiber development"/>
    <property type="evidence" value="ECO:0000250"/>
    <property type="project" value="UniProtKB"/>
</dbReference>
<dbReference type="GO" id="GO:0030240">
    <property type="term" value="P:skeletal muscle thin filament assembly"/>
    <property type="evidence" value="ECO:0000250"/>
    <property type="project" value="UniProtKB"/>
</dbReference>
<dbReference type="CDD" id="cd10224">
    <property type="entry name" value="ASKHA_NBD_actin"/>
    <property type="match status" value="1"/>
</dbReference>
<dbReference type="FunFam" id="3.30.420.40:FF:000131">
    <property type="entry name" value="Actin, alpha skeletal muscle"/>
    <property type="match status" value="1"/>
</dbReference>
<dbReference type="FunFam" id="3.30.420.40:FF:000291">
    <property type="entry name" value="Actin, alpha skeletal muscle"/>
    <property type="match status" value="1"/>
</dbReference>
<dbReference type="FunFam" id="3.90.640.10:FF:000047">
    <property type="entry name" value="Actin, alpha skeletal muscle"/>
    <property type="match status" value="1"/>
</dbReference>
<dbReference type="FunFam" id="3.30.420.40:FF:000058">
    <property type="entry name" value="Putative actin-related protein 5"/>
    <property type="match status" value="1"/>
</dbReference>
<dbReference type="Gene3D" id="3.30.420.40">
    <property type="match status" value="2"/>
</dbReference>
<dbReference type="Gene3D" id="3.90.640.10">
    <property type="entry name" value="Actin, Chain A, domain 4"/>
    <property type="match status" value="1"/>
</dbReference>
<dbReference type="InterPro" id="IPR004000">
    <property type="entry name" value="Actin"/>
</dbReference>
<dbReference type="InterPro" id="IPR020902">
    <property type="entry name" value="Actin/actin-like_CS"/>
</dbReference>
<dbReference type="InterPro" id="IPR004001">
    <property type="entry name" value="Actin_CS"/>
</dbReference>
<dbReference type="InterPro" id="IPR043129">
    <property type="entry name" value="ATPase_NBD"/>
</dbReference>
<dbReference type="PANTHER" id="PTHR11937">
    <property type="entry name" value="ACTIN"/>
    <property type="match status" value="1"/>
</dbReference>
<dbReference type="Pfam" id="PF00022">
    <property type="entry name" value="Actin"/>
    <property type="match status" value="1"/>
</dbReference>
<dbReference type="PRINTS" id="PR00190">
    <property type="entry name" value="ACTIN"/>
</dbReference>
<dbReference type="SMART" id="SM00268">
    <property type="entry name" value="ACTIN"/>
    <property type="match status" value="1"/>
</dbReference>
<dbReference type="SUPFAM" id="SSF53067">
    <property type="entry name" value="Actin-like ATPase domain"/>
    <property type="match status" value="2"/>
</dbReference>
<dbReference type="PROSITE" id="PS00406">
    <property type="entry name" value="ACTINS_1"/>
    <property type="match status" value="1"/>
</dbReference>
<dbReference type="PROSITE" id="PS00432">
    <property type="entry name" value="ACTINS_2"/>
    <property type="match status" value="1"/>
</dbReference>
<dbReference type="PROSITE" id="PS01132">
    <property type="entry name" value="ACTINS_ACT_LIKE"/>
    <property type="match status" value="1"/>
</dbReference>
<accession>P68137</accession>
<accession>P02568</accession>
<accession>P99020</accession>
<name>ACTS_PIG</name>
<organism>
    <name type="scientific">Sus scrofa</name>
    <name type="common">Pig</name>
    <dbReference type="NCBI Taxonomy" id="9823"/>
    <lineage>
        <taxon>Eukaryota</taxon>
        <taxon>Metazoa</taxon>
        <taxon>Chordata</taxon>
        <taxon>Craniata</taxon>
        <taxon>Vertebrata</taxon>
        <taxon>Euteleostomi</taxon>
        <taxon>Mammalia</taxon>
        <taxon>Eutheria</taxon>
        <taxon>Laurasiatheria</taxon>
        <taxon>Artiodactyla</taxon>
        <taxon>Suina</taxon>
        <taxon>Suidae</taxon>
        <taxon>Sus</taxon>
    </lineage>
</organism>